<reference key="1">
    <citation type="journal article" date="1998" name="Science">
        <title>Genome sequence of an obligate intracellular pathogen of humans: Chlamydia trachomatis.</title>
        <authorList>
            <person name="Stephens R.S."/>
            <person name="Kalman S."/>
            <person name="Lammel C.J."/>
            <person name="Fan J."/>
            <person name="Marathe R."/>
            <person name="Aravind L."/>
            <person name="Mitchell W.P."/>
            <person name="Olinger L."/>
            <person name="Tatusov R.L."/>
            <person name="Zhao Q."/>
            <person name="Koonin E.V."/>
            <person name="Davis R.W."/>
        </authorList>
    </citation>
    <scope>NUCLEOTIDE SEQUENCE [LARGE SCALE GENOMIC DNA]</scope>
    <source>
        <strain>ATCC VR-885 / DSM 19411 / UW-3/Cx</strain>
    </source>
</reference>
<dbReference type="EMBL" id="AE001273">
    <property type="protein sequence ID" value="AAC68171.1"/>
    <property type="status" value="ALT_INIT"/>
    <property type="molecule type" value="Genomic_DNA"/>
</dbReference>
<dbReference type="PIR" id="B71499">
    <property type="entry name" value="B71499"/>
</dbReference>
<dbReference type="RefSeq" id="NP_220084.1">
    <property type="nucleotide sequence ID" value="NC_000117.1"/>
</dbReference>
<dbReference type="RefSeq" id="WP_009872758.1">
    <property type="nucleotide sequence ID" value="NC_000117.1"/>
</dbReference>
<dbReference type="SMR" id="O84573"/>
<dbReference type="STRING" id="272561.CT_569"/>
<dbReference type="EnsemblBacteria" id="AAC68171">
    <property type="protein sequence ID" value="AAC68171"/>
    <property type="gene ID" value="CT_569"/>
</dbReference>
<dbReference type="GeneID" id="884357"/>
<dbReference type="KEGG" id="ctr:CT_569"/>
<dbReference type="PATRIC" id="fig|272561.5.peg.621"/>
<dbReference type="HOGENOM" id="CLU_156557_0_0_0"/>
<dbReference type="InParanoid" id="O84573"/>
<dbReference type="OrthoDB" id="18791at2"/>
<dbReference type="Proteomes" id="UP000000431">
    <property type="component" value="Chromosome"/>
</dbReference>
<dbReference type="GO" id="GO:0009279">
    <property type="term" value="C:cell outer membrane"/>
    <property type="evidence" value="ECO:0007669"/>
    <property type="project" value="UniProtKB-SubCell"/>
</dbReference>
<dbReference type="InterPro" id="IPR012902">
    <property type="entry name" value="N_methyl_site"/>
</dbReference>
<dbReference type="InterPro" id="IPR045584">
    <property type="entry name" value="Pilin-like"/>
</dbReference>
<dbReference type="Pfam" id="PF07963">
    <property type="entry name" value="N_methyl"/>
    <property type="match status" value="1"/>
</dbReference>
<dbReference type="SUPFAM" id="SSF54523">
    <property type="entry name" value="Pili subunits"/>
    <property type="match status" value="1"/>
</dbReference>
<name>OMPX_CHLTR</name>
<proteinExistence type="inferred from homology"/>
<comment type="subcellular location">
    <subcellularLocation>
        <location evidence="2">Cell outer membrane</location>
        <topology evidence="2">Peripheral membrane protein</topology>
    </subcellularLocation>
</comment>
<comment type="sequence caution" evidence="2">
    <conflict type="erroneous initiation">
        <sequence resource="EMBL-CDS" id="AAC68171"/>
    </conflict>
</comment>
<evidence type="ECO:0000255" key="1"/>
<evidence type="ECO:0000305" key="2"/>
<accession>O84573</accession>
<organism>
    <name type="scientific">Chlamydia trachomatis serovar D (strain ATCC VR-885 / DSM 19411 / UW-3/Cx)</name>
    <dbReference type="NCBI Taxonomy" id="272561"/>
    <lineage>
        <taxon>Bacteria</taxon>
        <taxon>Pseudomonadati</taxon>
        <taxon>Chlamydiota</taxon>
        <taxon>Chlamydiia</taxon>
        <taxon>Chlamydiales</taxon>
        <taxon>Chlamydiaceae</taxon>
        <taxon>Chlamydia/Chlamydophila group</taxon>
        <taxon>Chlamydia</taxon>
    </lineage>
</organism>
<gene>
    <name type="ordered locus">CT_569</name>
</gene>
<feature type="signal peptide" evidence="1">
    <location>
        <begin position="1"/>
        <end position="31"/>
    </location>
</feature>
<feature type="chain" id="PRO_0000020159" description="Putative outer membrane protein CT_569">
    <location>
        <begin position="32"/>
        <end position="124"/>
    </location>
</feature>
<keyword id="KW-0998">Cell outer membrane</keyword>
<keyword id="KW-0472">Membrane</keyword>
<keyword id="KW-1185">Reference proteome</keyword>
<keyword id="KW-0732">Signal</keyword>
<protein>
    <recommendedName>
        <fullName>Putative outer membrane protein CT_569</fullName>
    </recommendedName>
</protein>
<sequence>MKKTKKRKQSITLVEMMVVITLIGIIGGALAFNMRGSLQKGKIFQTEQNCARVYDVLMMEYASGNLSLKEVIANKEAILEDSAWCKEGKKLLKDAWGEDLLVKMNDKGDDIVVFSKKVRNEQRG</sequence>